<proteinExistence type="inferred from homology"/>
<organism>
    <name type="scientific">Mycobacterium bovis (strain BCG / Pasteur 1173P2)</name>
    <dbReference type="NCBI Taxonomy" id="410289"/>
    <lineage>
        <taxon>Bacteria</taxon>
        <taxon>Bacillati</taxon>
        <taxon>Actinomycetota</taxon>
        <taxon>Actinomycetes</taxon>
        <taxon>Mycobacteriales</taxon>
        <taxon>Mycobacteriaceae</taxon>
        <taxon>Mycobacterium</taxon>
        <taxon>Mycobacterium tuberculosis complex</taxon>
    </lineage>
</organism>
<sequence length="154" mass="15803">MSTTLAIVRLDPGLPLPSRAHDGDAGVDLYSAEDVELAPGRRALVRTGVAVAVPFGMVGLVHPRSGLATRVGLSIVNSPGTIDAGYRGEIKVALINLDPAAPIVVHRGDRIAQLLVQRVELVELVEVSSFDEAGLASTSRGDGGHGSSGGHASL</sequence>
<gene>
    <name evidence="2" type="primary">dut</name>
    <name type="ordered locus">BCG_2710c</name>
</gene>
<keyword id="KW-0378">Hydrolase</keyword>
<keyword id="KW-0460">Magnesium</keyword>
<keyword id="KW-0479">Metal-binding</keyword>
<keyword id="KW-0546">Nucleotide metabolism</keyword>
<name>DUT_MYCBP</name>
<comment type="function">
    <text evidence="2">This enzyme is involved in nucleotide metabolism: it produces dUMP, the immediate precursor of thymidine nucleotides and it decreases the intracellular concentration of dUTP so that uracil cannot be incorporated into DNA.</text>
</comment>
<comment type="catalytic activity">
    <reaction evidence="2">
        <text>dUTP + H2O = dUMP + diphosphate + H(+)</text>
        <dbReference type="Rhea" id="RHEA:10248"/>
        <dbReference type="ChEBI" id="CHEBI:15377"/>
        <dbReference type="ChEBI" id="CHEBI:15378"/>
        <dbReference type="ChEBI" id="CHEBI:33019"/>
        <dbReference type="ChEBI" id="CHEBI:61555"/>
        <dbReference type="ChEBI" id="CHEBI:246422"/>
        <dbReference type="EC" id="3.6.1.23"/>
    </reaction>
</comment>
<comment type="cofactor">
    <cofactor evidence="2">
        <name>Mg(2+)</name>
        <dbReference type="ChEBI" id="CHEBI:18420"/>
    </cofactor>
</comment>
<comment type="pathway">
    <text evidence="2">Pyrimidine metabolism; dUMP biosynthesis; dUMP from dCTP (dUTP route): step 2/2.</text>
</comment>
<comment type="subunit">
    <text evidence="2">Homotrimer.</text>
</comment>
<comment type="miscellaneous">
    <text evidence="1">Each trimer binds three substrate molecules. The ligands are bound between subunits, and for each substrate molecule, residues from adjacent subunits contribute to the binding interactions (By similarity).</text>
</comment>
<comment type="similarity">
    <text evidence="2">Belongs to the dUTPase family.</text>
</comment>
<reference key="1">
    <citation type="journal article" date="2007" name="Proc. Natl. Acad. Sci. U.S.A.">
        <title>Genome plasticity of BCG and impact on vaccine efficacy.</title>
        <authorList>
            <person name="Brosch R."/>
            <person name="Gordon S.V."/>
            <person name="Garnier T."/>
            <person name="Eiglmeier K."/>
            <person name="Frigui W."/>
            <person name="Valenti P."/>
            <person name="Dos Santos S."/>
            <person name="Duthoy S."/>
            <person name="Lacroix C."/>
            <person name="Garcia-Pelayo C."/>
            <person name="Inwald J.K."/>
            <person name="Golby P."/>
            <person name="Garcia J.N."/>
            <person name="Hewinson R.G."/>
            <person name="Behr M.A."/>
            <person name="Quail M.A."/>
            <person name="Churcher C."/>
            <person name="Barrell B.G."/>
            <person name="Parkhill J."/>
            <person name="Cole S.T."/>
        </authorList>
    </citation>
    <scope>NUCLEOTIDE SEQUENCE [LARGE SCALE GENOMIC DNA]</scope>
    <source>
        <strain>BCG / Pasteur 1173P2</strain>
    </source>
</reference>
<evidence type="ECO:0000250" key="1"/>
<evidence type="ECO:0000255" key="2">
    <source>
        <dbReference type="HAMAP-Rule" id="MF_00116"/>
    </source>
</evidence>
<protein>
    <recommendedName>
        <fullName evidence="2">Deoxyuridine 5'-triphosphate nucleotidohydrolase</fullName>
        <shortName evidence="2">dUTPase</shortName>
        <ecNumber evidence="2">3.6.1.23</ecNumber>
    </recommendedName>
    <alternativeName>
        <fullName evidence="2">dUTP pyrophosphatase</fullName>
    </alternativeName>
</protein>
<accession>A1KM35</accession>
<feature type="chain" id="PRO_1000015484" description="Deoxyuridine 5'-triphosphate nucleotidohydrolase">
    <location>
        <begin position="1"/>
        <end position="154"/>
    </location>
</feature>
<feature type="binding site" evidence="2">
    <location>
        <begin position="64"/>
        <end position="66"/>
    </location>
    <ligand>
        <name>substrate</name>
    </ligand>
</feature>
<feature type="binding site" evidence="2">
    <location>
        <position position="77"/>
    </location>
    <ligand>
        <name>substrate</name>
    </ligand>
</feature>
<feature type="binding site" evidence="2">
    <location>
        <begin position="81"/>
        <end position="83"/>
    </location>
    <ligand>
        <name>substrate</name>
    </ligand>
</feature>
<feature type="binding site" evidence="2">
    <location>
        <position position="91"/>
    </location>
    <ligand>
        <name>substrate</name>
    </ligand>
</feature>
<dbReference type="EC" id="3.6.1.23" evidence="2"/>
<dbReference type="EMBL" id="AM408590">
    <property type="protein sequence ID" value="CAL72698.1"/>
    <property type="molecule type" value="Genomic_DNA"/>
</dbReference>
<dbReference type="RefSeq" id="WP_003413930.1">
    <property type="nucleotide sequence ID" value="NC_008769.1"/>
</dbReference>
<dbReference type="SMR" id="A1KM35"/>
<dbReference type="GeneID" id="45426685"/>
<dbReference type="KEGG" id="mbb:BCG_2710c"/>
<dbReference type="HOGENOM" id="CLU_068508_1_3_11"/>
<dbReference type="UniPathway" id="UPA00610">
    <property type="reaction ID" value="UER00666"/>
</dbReference>
<dbReference type="Proteomes" id="UP000001472">
    <property type="component" value="Chromosome"/>
</dbReference>
<dbReference type="GO" id="GO:0004170">
    <property type="term" value="F:dUTP diphosphatase activity"/>
    <property type="evidence" value="ECO:0007669"/>
    <property type="project" value="UniProtKB-UniRule"/>
</dbReference>
<dbReference type="GO" id="GO:0000287">
    <property type="term" value="F:magnesium ion binding"/>
    <property type="evidence" value="ECO:0007669"/>
    <property type="project" value="UniProtKB-UniRule"/>
</dbReference>
<dbReference type="GO" id="GO:0006226">
    <property type="term" value="P:dUMP biosynthetic process"/>
    <property type="evidence" value="ECO:0007669"/>
    <property type="project" value="UniProtKB-UniRule"/>
</dbReference>
<dbReference type="GO" id="GO:0046081">
    <property type="term" value="P:dUTP catabolic process"/>
    <property type="evidence" value="ECO:0007669"/>
    <property type="project" value="InterPro"/>
</dbReference>
<dbReference type="CDD" id="cd07557">
    <property type="entry name" value="trimeric_dUTPase"/>
    <property type="match status" value="1"/>
</dbReference>
<dbReference type="FunFam" id="2.70.40.10:FF:000008">
    <property type="entry name" value="Deoxyuridine 5'-triphosphate nucleotidohydrolase"/>
    <property type="match status" value="1"/>
</dbReference>
<dbReference type="Gene3D" id="2.70.40.10">
    <property type="match status" value="1"/>
</dbReference>
<dbReference type="HAMAP" id="MF_00116">
    <property type="entry name" value="dUTPase_bact"/>
    <property type="match status" value="1"/>
</dbReference>
<dbReference type="InterPro" id="IPR008181">
    <property type="entry name" value="dUTPase"/>
</dbReference>
<dbReference type="InterPro" id="IPR029054">
    <property type="entry name" value="dUTPase-like"/>
</dbReference>
<dbReference type="InterPro" id="IPR036157">
    <property type="entry name" value="dUTPase-like_sf"/>
</dbReference>
<dbReference type="InterPro" id="IPR033704">
    <property type="entry name" value="dUTPase_trimeric"/>
</dbReference>
<dbReference type="NCBIfam" id="TIGR00576">
    <property type="entry name" value="dut"/>
    <property type="match status" value="1"/>
</dbReference>
<dbReference type="NCBIfam" id="NF001862">
    <property type="entry name" value="PRK00601.1"/>
    <property type="match status" value="1"/>
</dbReference>
<dbReference type="PANTHER" id="PTHR11241">
    <property type="entry name" value="DEOXYURIDINE 5'-TRIPHOSPHATE NUCLEOTIDOHYDROLASE"/>
    <property type="match status" value="1"/>
</dbReference>
<dbReference type="PANTHER" id="PTHR11241:SF0">
    <property type="entry name" value="DEOXYURIDINE 5'-TRIPHOSPHATE NUCLEOTIDOHYDROLASE"/>
    <property type="match status" value="1"/>
</dbReference>
<dbReference type="Pfam" id="PF00692">
    <property type="entry name" value="dUTPase"/>
    <property type="match status" value="1"/>
</dbReference>
<dbReference type="SUPFAM" id="SSF51283">
    <property type="entry name" value="dUTPase-like"/>
    <property type="match status" value="1"/>
</dbReference>